<comment type="function">
    <text evidence="1">Functions in the biosynthesis of branched-chain amino acids. Catalyzes the dehydration of (2R,3R)-2,3-dihydroxy-3-methylpentanoate (2,3-dihydroxy-3-methylvalerate) into 2-oxo-3-methylpentanoate (2-oxo-3-methylvalerate) and of (2R)-2,3-dihydroxy-3-methylbutanoate (2,3-dihydroxyisovalerate) into 2-oxo-3-methylbutanoate (2-oxoisovalerate), the penultimate precursor to L-isoleucine and L-valine, respectively.</text>
</comment>
<comment type="catalytic activity">
    <reaction evidence="1">
        <text>(2R)-2,3-dihydroxy-3-methylbutanoate = 3-methyl-2-oxobutanoate + H2O</text>
        <dbReference type="Rhea" id="RHEA:24809"/>
        <dbReference type="ChEBI" id="CHEBI:11851"/>
        <dbReference type="ChEBI" id="CHEBI:15377"/>
        <dbReference type="ChEBI" id="CHEBI:49072"/>
        <dbReference type="EC" id="4.2.1.9"/>
    </reaction>
    <physiologicalReaction direction="left-to-right" evidence="1">
        <dbReference type="Rhea" id="RHEA:24810"/>
    </physiologicalReaction>
</comment>
<comment type="catalytic activity">
    <reaction evidence="1">
        <text>(2R,3R)-2,3-dihydroxy-3-methylpentanoate = (S)-3-methyl-2-oxopentanoate + H2O</text>
        <dbReference type="Rhea" id="RHEA:27694"/>
        <dbReference type="ChEBI" id="CHEBI:15377"/>
        <dbReference type="ChEBI" id="CHEBI:35146"/>
        <dbReference type="ChEBI" id="CHEBI:49258"/>
        <dbReference type="EC" id="4.2.1.9"/>
    </reaction>
    <physiologicalReaction direction="left-to-right" evidence="1">
        <dbReference type="Rhea" id="RHEA:27695"/>
    </physiologicalReaction>
</comment>
<comment type="cofactor">
    <cofactor evidence="1">
        <name>[2Fe-2S] cluster</name>
        <dbReference type="ChEBI" id="CHEBI:190135"/>
    </cofactor>
    <text evidence="1">Binds 1 [2Fe-2S] cluster per subunit. This cluster acts as a Lewis acid cofactor.</text>
</comment>
<comment type="cofactor">
    <cofactor evidence="1">
        <name>Mg(2+)</name>
        <dbReference type="ChEBI" id="CHEBI:18420"/>
    </cofactor>
</comment>
<comment type="pathway">
    <text evidence="1">Amino-acid biosynthesis; L-isoleucine biosynthesis; L-isoleucine from 2-oxobutanoate: step 3/4.</text>
</comment>
<comment type="pathway">
    <text evidence="1">Amino-acid biosynthesis; L-valine biosynthesis; L-valine from pyruvate: step 3/4.</text>
</comment>
<comment type="subunit">
    <text evidence="1">Homodimer.</text>
</comment>
<comment type="similarity">
    <text evidence="1">Belongs to the IlvD/Edd family.</text>
</comment>
<accession>C4ZAW6</accession>
<sequence length="559" mass="58898">MISDNARAGMQQAPARSLFNALGFTPEEMKKPMVGIVSSFNEIVPGHMNIDKIVEAVKLGVAEAGGVPVVFPAIAVCDGIAMGHVGMKYSLVTRDLIADSTECMAIAHQFDALVMVPNCDKNVPGLLMAAARLNLPTVFVSGGPMLAGHVKGRKRSLSSMFEAVGSYAAGTMTEDDVCEYENKVCPTCGSCSGMYTANSMNCLTEALGMGLRGNGTIPAVYSERIRLAKHAGMAVMDMYNKGIKARDIITKDAIMNALTVDMALGCSTNSMLHLPAIAHEIGFDFDISFANPISERTPNLCHLAPAGPTYMEDLNEAGGVWAVMKELADIGLLNTDCMTVTGKTVGENIKNAVNRDPEVIRPVDNPYSKTGGLAVLKGNLAPDGSVVKRSAVVDEMMVHEGPARVFDCEEDAIAAIKGGKIVEGDVVVIRYEGPKGGPGMREMLNPTSAIAGMGLGSSVALITDGRFSGASRGASIGHVSPEAAVGGPIALVEEGDIIKIDIPNMKLELDVSDEVLAERKAKWQPREPKVTTGYLKRYAALVTSGNRGAILALPGEQNA</sequence>
<proteinExistence type="inferred from homology"/>
<evidence type="ECO:0000255" key="1">
    <source>
        <dbReference type="HAMAP-Rule" id="MF_00012"/>
    </source>
</evidence>
<organism>
    <name type="scientific">Agathobacter rectalis (strain ATCC 33656 / DSM 3377 / JCM 17463 / KCTC 5835 / VPI 0990)</name>
    <name type="common">Eubacterium rectale</name>
    <dbReference type="NCBI Taxonomy" id="515619"/>
    <lineage>
        <taxon>Bacteria</taxon>
        <taxon>Bacillati</taxon>
        <taxon>Bacillota</taxon>
        <taxon>Clostridia</taxon>
        <taxon>Lachnospirales</taxon>
        <taxon>Lachnospiraceae</taxon>
        <taxon>Agathobacter</taxon>
    </lineage>
</organism>
<name>ILVD_AGARV</name>
<gene>
    <name evidence="1" type="primary">ilvD</name>
    <name type="ordered locus">EUBREC_1877</name>
</gene>
<keyword id="KW-0001">2Fe-2S</keyword>
<keyword id="KW-0028">Amino-acid biosynthesis</keyword>
<keyword id="KW-0100">Branched-chain amino acid biosynthesis</keyword>
<keyword id="KW-0408">Iron</keyword>
<keyword id="KW-0411">Iron-sulfur</keyword>
<keyword id="KW-0456">Lyase</keyword>
<keyword id="KW-0460">Magnesium</keyword>
<keyword id="KW-0479">Metal-binding</keyword>
<protein>
    <recommendedName>
        <fullName evidence="1">Dihydroxy-acid dehydratase</fullName>
        <shortName evidence="1">DAD</shortName>
        <ecNumber evidence="1">4.2.1.9</ecNumber>
    </recommendedName>
</protein>
<feature type="chain" id="PRO_1000201778" description="Dihydroxy-acid dehydratase">
    <location>
        <begin position="1"/>
        <end position="559"/>
    </location>
</feature>
<feature type="active site" description="Proton acceptor" evidence="1">
    <location>
        <position position="468"/>
    </location>
</feature>
<feature type="binding site" evidence="1">
    <location>
        <position position="78"/>
    </location>
    <ligand>
        <name>Mg(2+)</name>
        <dbReference type="ChEBI" id="CHEBI:18420"/>
    </ligand>
</feature>
<feature type="binding site" evidence="1">
    <location>
        <position position="119"/>
    </location>
    <ligand>
        <name>[2Fe-2S] cluster</name>
        <dbReference type="ChEBI" id="CHEBI:190135"/>
    </ligand>
</feature>
<feature type="binding site" evidence="1">
    <location>
        <position position="120"/>
    </location>
    <ligand>
        <name>Mg(2+)</name>
        <dbReference type="ChEBI" id="CHEBI:18420"/>
    </ligand>
</feature>
<feature type="binding site" description="via carbamate group" evidence="1">
    <location>
        <position position="121"/>
    </location>
    <ligand>
        <name>Mg(2+)</name>
        <dbReference type="ChEBI" id="CHEBI:18420"/>
    </ligand>
</feature>
<feature type="binding site" evidence="1">
    <location>
        <position position="191"/>
    </location>
    <ligand>
        <name>[2Fe-2S] cluster</name>
        <dbReference type="ChEBI" id="CHEBI:190135"/>
    </ligand>
</feature>
<feature type="binding site" evidence="1">
    <location>
        <position position="442"/>
    </location>
    <ligand>
        <name>Mg(2+)</name>
        <dbReference type="ChEBI" id="CHEBI:18420"/>
    </ligand>
</feature>
<feature type="modified residue" description="N6-carboxylysine" evidence="1">
    <location>
        <position position="121"/>
    </location>
</feature>
<reference key="1">
    <citation type="journal article" date="2009" name="Proc. Natl. Acad. Sci. U.S.A.">
        <title>Characterizing a model human gut microbiota composed of members of its two dominant bacterial phyla.</title>
        <authorList>
            <person name="Mahowald M.A."/>
            <person name="Rey F.E."/>
            <person name="Seedorf H."/>
            <person name="Turnbaugh P.J."/>
            <person name="Fulton R.S."/>
            <person name="Wollam A."/>
            <person name="Shah N."/>
            <person name="Wang C."/>
            <person name="Magrini V."/>
            <person name="Wilson R.K."/>
            <person name="Cantarel B.L."/>
            <person name="Coutinho P.M."/>
            <person name="Henrissat B."/>
            <person name="Crock L.W."/>
            <person name="Russell A."/>
            <person name="Verberkmoes N.C."/>
            <person name="Hettich R.L."/>
            <person name="Gordon J.I."/>
        </authorList>
    </citation>
    <scope>NUCLEOTIDE SEQUENCE [LARGE SCALE GENOMIC DNA]</scope>
    <source>
        <strain>ATCC 33656 / DSM 3377 / JCM 17463 / KCTC 5835 / LMG 30912 / VPI 0990</strain>
    </source>
</reference>
<dbReference type="EC" id="4.2.1.9" evidence="1"/>
<dbReference type="EMBL" id="CP001107">
    <property type="protein sequence ID" value="ACR75621.1"/>
    <property type="molecule type" value="Genomic_DNA"/>
</dbReference>
<dbReference type="RefSeq" id="WP_012742718.1">
    <property type="nucleotide sequence ID" value="NZ_CAXSYD010000002.1"/>
</dbReference>
<dbReference type="SMR" id="C4ZAW6"/>
<dbReference type="STRING" id="515619.EUBREC_1877"/>
<dbReference type="PaxDb" id="515619-EUBREC_1877"/>
<dbReference type="GeneID" id="86988673"/>
<dbReference type="KEGG" id="ere:EUBREC_1877"/>
<dbReference type="HOGENOM" id="CLU_014271_4_2_9"/>
<dbReference type="UniPathway" id="UPA00047">
    <property type="reaction ID" value="UER00057"/>
</dbReference>
<dbReference type="UniPathway" id="UPA00049">
    <property type="reaction ID" value="UER00061"/>
</dbReference>
<dbReference type="Proteomes" id="UP000001477">
    <property type="component" value="Chromosome"/>
</dbReference>
<dbReference type="GO" id="GO:0005829">
    <property type="term" value="C:cytosol"/>
    <property type="evidence" value="ECO:0007669"/>
    <property type="project" value="TreeGrafter"/>
</dbReference>
<dbReference type="GO" id="GO:0051537">
    <property type="term" value="F:2 iron, 2 sulfur cluster binding"/>
    <property type="evidence" value="ECO:0007669"/>
    <property type="project" value="UniProtKB-UniRule"/>
</dbReference>
<dbReference type="GO" id="GO:0004160">
    <property type="term" value="F:dihydroxy-acid dehydratase activity"/>
    <property type="evidence" value="ECO:0007669"/>
    <property type="project" value="UniProtKB-UniRule"/>
</dbReference>
<dbReference type="GO" id="GO:0000287">
    <property type="term" value="F:magnesium ion binding"/>
    <property type="evidence" value="ECO:0007669"/>
    <property type="project" value="UniProtKB-UniRule"/>
</dbReference>
<dbReference type="GO" id="GO:0009097">
    <property type="term" value="P:isoleucine biosynthetic process"/>
    <property type="evidence" value="ECO:0007669"/>
    <property type="project" value="UniProtKB-UniRule"/>
</dbReference>
<dbReference type="GO" id="GO:0009099">
    <property type="term" value="P:L-valine biosynthetic process"/>
    <property type="evidence" value="ECO:0007669"/>
    <property type="project" value="UniProtKB-UniRule"/>
</dbReference>
<dbReference type="FunFam" id="3.50.30.80:FF:000001">
    <property type="entry name" value="Dihydroxy-acid dehydratase"/>
    <property type="match status" value="1"/>
</dbReference>
<dbReference type="Gene3D" id="3.50.30.80">
    <property type="entry name" value="IlvD/EDD C-terminal domain-like"/>
    <property type="match status" value="1"/>
</dbReference>
<dbReference type="HAMAP" id="MF_00012">
    <property type="entry name" value="IlvD"/>
    <property type="match status" value="1"/>
</dbReference>
<dbReference type="InterPro" id="IPR042096">
    <property type="entry name" value="Dihydro-acid_dehy_C"/>
</dbReference>
<dbReference type="InterPro" id="IPR004404">
    <property type="entry name" value="DihydroxyA_deHydtase"/>
</dbReference>
<dbReference type="InterPro" id="IPR020558">
    <property type="entry name" value="DiOHA_6PGluconate_deHydtase_CS"/>
</dbReference>
<dbReference type="InterPro" id="IPR056740">
    <property type="entry name" value="ILV_EDD_C"/>
</dbReference>
<dbReference type="InterPro" id="IPR000581">
    <property type="entry name" value="ILV_EDD_N"/>
</dbReference>
<dbReference type="InterPro" id="IPR037237">
    <property type="entry name" value="IlvD/EDD_N"/>
</dbReference>
<dbReference type="NCBIfam" id="TIGR00110">
    <property type="entry name" value="ilvD"/>
    <property type="match status" value="1"/>
</dbReference>
<dbReference type="NCBIfam" id="NF002068">
    <property type="entry name" value="PRK00911.1"/>
    <property type="match status" value="1"/>
</dbReference>
<dbReference type="PANTHER" id="PTHR43661">
    <property type="entry name" value="D-XYLONATE DEHYDRATASE"/>
    <property type="match status" value="1"/>
</dbReference>
<dbReference type="PANTHER" id="PTHR43661:SF3">
    <property type="entry name" value="D-XYLONATE DEHYDRATASE YAGF-RELATED"/>
    <property type="match status" value="1"/>
</dbReference>
<dbReference type="Pfam" id="PF24877">
    <property type="entry name" value="ILV_EDD_C"/>
    <property type="match status" value="1"/>
</dbReference>
<dbReference type="Pfam" id="PF00920">
    <property type="entry name" value="ILVD_EDD_N"/>
    <property type="match status" value="1"/>
</dbReference>
<dbReference type="SUPFAM" id="SSF143975">
    <property type="entry name" value="IlvD/EDD N-terminal domain-like"/>
    <property type="match status" value="1"/>
</dbReference>
<dbReference type="SUPFAM" id="SSF52016">
    <property type="entry name" value="LeuD/IlvD-like"/>
    <property type="match status" value="1"/>
</dbReference>
<dbReference type="PROSITE" id="PS00886">
    <property type="entry name" value="ILVD_EDD_1"/>
    <property type="match status" value="1"/>
</dbReference>
<dbReference type="PROSITE" id="PS00887">
    <property type="entry name" value="ILVD_EDD_2"/>
    <property type="match status" value="1"/>
</dbReference>